<dbReference type="EMBL" id="CP001033">
    <property type="protein sequence ID" value="ACB90189.1"/>
    <property type="molecule type" value="Genomic_DNA"/>
</dbReference>
<dbReference type="RefSeq" id="WP_000124836.1">
    <property type="nucleotide sequence ID" value="NC_010582.1"/>
</dbReference>
<dbReference type="SMR" id="B2IPB5"/>
<dbReference type="GeneID" id="45653697"/>
<dbReference type="KEGG" id="spw:SPCG_0937"/>
<dbReference type="HOGENOM" id="CLU_123265_0_1_9"/>
<dbReference type="GO" id="GO:1990904">
    <property type="term" value="C:ribonucleoprotein complex"/>
    <property type="evidence" value="ECO:0007669"/>
    <property type="project" value="UniProtKB-KW"/>
</dbReference>
<dbReference type="GO" id="GO:0005840">
    <property type="term" value="C:ribosome"/>
    <property type="evidence" value="ECO:0007669"/>
    <property type="project" value="UniProtKB-KW"/>
</dbReference>
<dbReference type="GO" id="GO:0019843">
    <property type="term" value="F:rRNA binding"/>
    <property type="evidence" value="ECO:0007669"/>
    <property type="project" value="UniProtKB-UniRule"/>
</dbReference>
<dbReference type="GO" id="GO:0003735">
    <property type="term" value="F:structural constituent of ribosome"/>
    <property type="evidence" value="ECO:0007669"/>
    <property type="project" value="InterPro"/>
</dbReference>
<dbReference type="GO" id="GO:0000027">
    <property type="term" value="P:ribosomal large subunit assembly"/>
    <property type="evidence" value="ECO:0007669"/>
    <property type="project" value="UniProtKB-UniRule"/>
</dbReference>
<dbReference type="GO" id="GO:0006412">
    <property type="term" value="P:translation"/>
    <property type="evidence" value="ECO:0007669"/>
    <property type="project" value="InterPro"/>
</dbReference>
<dbReference type="CDD" id="cd07026">
    <property type="entry name" value="Ribosomal_L20"/>
    <property type="match status" value="1"/>
</dbReference>
<dbReference type="FunFam" id="1.10.1900.20:FF:000001">
    <property type="entry name" value="50S ribosomal protein L20"/>
    <property type="match status" value="1"/>
</dbReference>
<dbReference type="Gene3D" id="6.10.160.10">
    <property type="match status" value="1"/>
</dbReference>
<dbReference type="Gene3D" id="1.10.1900.20">
    <property type="entry name" value="Ribosomal protein L20"/>
    <property type="match status" value="1"/>
</dbReference>
<dbReference type="HAMAP" id="MF_00382">
    <property type="entry name" value="Ribosomal_bL20"/>
    <property type="match status" value="1"/>
</dbReference>
<dbReference type="InterPro" id="IPR005813">
    <property type="entry name" value="Ribosomal_bL20"/>
</dbReference>
<dbReference type="InterPro" id="IPR049946">
    <property type="entry name" value="RIBOSOMAL_L20_CS"/>
</dbReference>
<dbReference type="InterPro" id="IPR035566">
    <property type="entry name" value="Ribosomal_protein_bL20_C"/>
</dbReference>
<dbReference type="NCBIfam" id="TIGR01032">
    <property type="entry name" value="rplT_bact"/>
    <property type="match status" value="1"/>
</dbReference>
<dbReference type="PANTHER" id="PTHR10986">
    <property type="entry name" value="39S RIBOSOMAL PROTEIN L20"/>
    <property type="match status" value="1"/>
</dbReference>
<dbReference type="Pfam" id="PF00453">
    <property type="entry name" value="Ribosomal_L20"/>
    <property type="match status" value="1"/>
</dbReference>
<dbReference type="PRINTS" id="PR00062">
    <property type="entry name" value="RIBOSOMALL20"/>
</dbReference>
<dbReference type="SUPFAM" id="SSF74731">
    <property type="entry name" value="Ribosomal protein L20"/>
    <property type="match status" value="1"/>
</dbReference>
<dbReference type="PROSITE" id="PS00937">
    <property type="entry name" value="RIBOSOMAL_L20"/>
    <property type="match status" value="1"/>
</dbReference>
<evidence type="ECO:0000255" key="1">
    <source>
        <dbReference type="HAMAP-Rule" id="MF_00382"/>
    </source>
</evidence>
<evidence type="ECO:0000305" key="2"/>
<sequence>MARVKGGVVSRKRRKRILKLAKGYYGAKHILFRTAKEQVMNSYYYAYRDRRQKKRDFRKLWITRINAAARMNGLSYSQLMHGLKLAEIEVNRKMLADLAVNDAVAFTALADAAKAKLGK</sequence>
<keyword id="KW-0687">Ribonucleoprotein</keyword>
<keyword id="KW-0689">Ribosomal protein</keyword>
<keyword id="KW-0694">RNA-binding</keyword>
<keyword id="KW-0699">rRNA-binding</keyword>
<organism>
    <name type="scientific">Streptococcus pneumoniae (strain CGSP14)</name>
    <dbReference type="NCBI Taxonomy" id="516950"/>
    <lineage>
        <taxon>Bacteria</taxon>
        <taxon>Bacillati</taxon>
        <taxon>Bacillota</taxon>
        <taxon>Bacilli</taxon>
        <taxon>Lactobacillales</taxon>
        <taxon>Streptococcaceae</taxon>
        <taxon>Streptococcus</taxon>
    </lineage>
</organism>
<protein>
    <recommendedName>
        <fullName evidence="1">Large ribosomal subunit protein bL20</fullName>
    </recommendedName>
    <alternativeName>
        <fullName evidence="2">50S ribosomal protein L20</fullName>
    </alternativeName>
</protein>
<accession>B2IPB5</accession>
<name>RL20_STRPS</name>
<reference key="1">
    <citation type="journal article" date="2009" name="BMC Genomics">
        <title>Genome evolution driven by host adaptations results in a more virulent and antimicrobial-resistant Streptococcus pneumoniae serotype 14.</title>
        <authorList>
            <person name="Ding F."/>
            <person name="Tang P."/>
            <person name="Hsu M.-H."/>
            <person name="Cui P."/>
            <person name="Hu S."/>
            <person name="Yu J."/>
            <person name="Chiu C.-H."/>
        </authorList>
    </citation>
    <scope>NUCLEOTIDE SEQUENCE [LARGE SCALE GENOMIC DNA]</scope>
    <source>
        <strain>CGSP14</strain>
    </source>
</reference>
<feature type="chain" id="PRO_1000122380" description="Large ribosomal subunit protein bL20">
    <location>
        <begin position="1"/>
        <end position="119"/>
    </location>
</feature>
<comment type="function">
    <text evidence="1">Binds directly to 23S ribosomal RNA and is necessary for the in vitro assembly process of the 50S ribosomal subunit. It is not involved in the protein synthesizing functions of that subunit.</text>
</comment>
<comment type="similarity">
    <text evidence="1">Belongs to the bacterial ribosomal protein bL20 family.</text>
</comment>
<gene>
    <name evidence="1" type="primary">rplT</name>
    <name type="ordered locus">SPCG_0937</name>
</gene>
<proteinExistence type="inferred from homology"/>